<dbReference type="EC" id="1.8.4.12" evidence="3 6"/>
<dbReference type="EC" id="1.8.4.14" evidence="3 4 5 6"/>
<dbReference type="EMBL" id="AF195142">
    <property type="protein sequence ID" value="AAF13697.1"/>
    <property type="molecule type" value="mRNA"/>
</dbReference>
<dbReference type="EMBL" id="AK002339">
    <property type="protein sequence ID" value="BAC55245.1"/>
    <property type="molecule type" value="mRNA"/>
</dbReference>
<dbReference type="EMBL" id="AK002652">
    <property type="protein sequence ID" value="BAE43148.1"/>
    <property type="molecule type" value="mRNA"/>
</dbReference>
<dbReference type="EMBL" id="AK003112">
    <property type="protein sequence ID" value="BAC55248.1"/>
    <property type="molecule type" value="mRNA"/>
</dbReference>
<dbReference type="EMBL" id="AK003624">
    <property type="protein sequence ID" value="BAC55249.1"/>
    <property type="molecule type" value="mRNA"/>
</dbReference>
<dbReference type="EMBL" id="BC090646">
    <property type="protein sequence ID" value="AAH90646.1"/>
    <property type="molecule type" value="mRNA"/>
</dbReference>
<dbReference type="CCDS" id="CCDS28495.1"/>
<dbReference type="RefSeq" id="NP_001333597.1">
    <property type="nucleotide sequence ID" value="NM_001346668.1"/>
</dbReference>
<dbReference type="RefSeq" id="NP_038787.1">
    <property type="nucleotide sequence ID" value="NM_013759.3"/>
</dbReference>
<dbReference type="PDB" id="2KV1">
    <property type="method" value="NMR"/>
    <property type="chains" value="A=1-116"/>
</dbReference>
<dbReference type="PDBsum" id="2KV1"/>
<dbReference type="BMRB" id="Q9JLC3"/>
<dbReference type="SMR" id="Q9JLC3"/>
<dbReference type="BioGRID" id="205170">
    <property type="interactions" value="1"/>
</dbReference>
<dbReference type="FunCoup" id="Q9JLC3">
    <property type="interactions" value="800"/>
</dbReference>
<dbReference type="IntAct" id="Q9JLC3">
    <property type="interactions" value="1"/>
</dbReference>
<dbReference type="STRING" id="10090.ENSMUSP00000099300"/>
<dbReference type="iPTMnet" id="Q9JLC3"/>
<dbReference type="PhosphoSitePlus" id="Q9JLC3"/>
<dbReference type="SwissPalm" id="Q9JLC3"/>
<dbReference type="jPOST" id="Q9JLC3"/>
<dbReference type="PaxDb" id="10090-ENSMUSP00000110917"/>
<dbReference type="ProteomicsDB" id="291525"/>
<dbReference type="Antibodypedia" id="58024">
    <property type="antibodies" value="130 antibodies from 24 providers"/>
</dbReference>
<dbReference type="DNASU" id="27361"/>
<dbReference type="Ensembl" id="ENSMUST00000101800.7">
    <property type="protein sequence ID" value="ENSMUSP00000099300.7"/>
    <property type="gene ID" value="ENSMUSG00000075705.14"/>
</dbReference>
<dbReference type="Ensembl" id="ENSMUST00000115262.9">
    <property type="protein sequence ID" value="ENSMUSP00000110917.3"/>
    <property type="gene ID" value="ENSMUSG00000075705.14"/>
</dbReference>
<dbReference type="GeneID" id="27361"/>
<dbReference type="KEGG" id="mmu:27361"/>
<dbReference type="UCSC" id="uc008ayh.1">
    <property type="organism name" value="mouse"/>
</dbReference>
<dbReference type="AGR" id="MGI:1351642"/>
<dbReference type="CTD" id="51734"/>
<dbReference type="MGI" id="MGI:1351642">
    <property type="gene designation" value="Msrb1"/>
</dbReference>
<dbReference type="VEuPathDB" id="HostDB:ENSMUSG00000075705"/>
<dbReference type="eggNOG" id="KOG0856">
    <property type="taxonomic scope" value="Eukaryota"/>
</dbReference>
<dbReference type="GeneTree" id="ENSGT00510000047678"/>
<dbReference type="HOGENOM" id="CLU_147472_1_0_1"/>
<dbReference type="InParanoid" id="Q9JLC3"/>
<dbReference type="OMA" id="CSKCEHQ"/>
<dbReference type="OrthoDB" id="44061at2759"/>
<dbReference type="PhylomeDB" id="Q9JLC3"/>
<dbReference type="TreeFam" id="TF329147"/>
<dbReference type="BRENDA" id="1.8.4.12">
    <property type="organism ID" value="3474"/>
</dbReference>
<dbReference type="Reactome" id="R-MMU-5676934">
    <property type="pathway name" value="Protein repair"/>
</dbReference>
<dbReference type="BioGRID-ORCS" id="27361">
    <property type="hits" value="8 hits in 78 CRISPR screens"/>
</dbReference>
<dbReference type="ChiTaRS" id="Msrb1">
    <property type="organism name" value="mouse"/>
</dbReference>
<dbReference type="EvolutionaryTrace" id="Q9JLC3"/>
<dbReference type="PRO" id="PR:Q9JLC3"/>
<dbReference type="Proteomes" id="UP000000589">
    <property type="component" value="Chromosome 17"/>
</dbReference>
<dbReference type="RNAct" id="Q9JLC3">
    <property type="molecule type" value="protein"/>
</dbReference>
<dbReference type="Bgee" id="ENSMUSG00000075705">
    <property type="expression patterns" value="Expressed in granulocyte and 261 other cell types or tissues"/>
</dbReference>
<dbReference type="GO" id="GO:0005737">
    <property type="term" value="C:cytoplasm"/>
    <property type="evidence" value="ECO:0000314"/>
    <property type="project" value="MGI"/>
</dbReference>
<dbReference type="GO" id="GO:0005856">
    <property type="term" value="C:cytoskeleton"/>
    <property type="evidence" value="ECO:0007669"/>
    <property type="project" value="UniProtKB-SubCell"/>
</dbReference>
<dbReference type="GO" id="GO:0005634">
    <property type="term" value="C:nucleus"/>
    <property type="evidence" value="ECO:0000314"/>
    <property type="project" value="MGI"/>
</dbReference>
<dbReference type="GO" id="GO:0003779">
    <property type="term" value="F:actin binding"/>
    <property type="evidence" value="ECO:0000314"/>
    <property type="project" value="UniProtKB"/>
</dbReference>
<dbReference type="GO" id="GO:0033745">
    <property type="term" value="F:L-methionine-(R)-S-oxide reductase activity"/>
    <property type="evidence" value="ECO:0007669"/>
    <property type="project" value="UniProtKB-EC"/>
</dbReference>
<dbReference type="GO" id="GO:0033743">
    <property type="term" value="F:peptide-methionine (R)-S-oxide reductase activity"/>
    <property type="evidence" value="ECO:0000314"/>
    <property type="project" value="UniProtKB"/>
</dbReference>
<dbReference type="GO" id="GO:0008270">
    <property type="term" value="F:zinc ion binding"/>
    <property type="evidence" value="ECO:0000314"/>
    <property type="project" value="HGNC-UCL"/>
</dbReference>
<dbReference type="GO" id="GO:0030041">
    <property type="term" value="P:actin filament polymerization"/>
    <property type="evidence" value="ECO:0000314"/>
    <property type="project" value="UniProtKB"/>
</dbReference>
<dbReference type="GO" id="GO:0045087">
    <property type="term" value="P:innate immune response"/>
    <property type="evidence" value="ECO:0000315"/>
    <property type="project" value="UniProtKB"/>
</dbReference>
<dbReference type="GO" id="GO:0030091">
    <property type="term" value="P:protein repair"/>
    <property type="evidence" value="ECO:0000314"/>
    <property type="project" value="HGNC-UCL"/>
</dbReference>
<dbReference type="DisProt" id="DP02258"/>
<dbReference type="FunFam" id="2.170.150.20:FF:000008">
    <property type="entry name" value="methionine-R-sulfoxide reductase B1"/>
    <property type="match status" value="1"/>
</dbReference>
<dbReference type="Gene3D" id="2.170.150.20">
    <property type="entry name" value="Peptide methionine sulfoxide reductase"/>
    <property type="match status" value="1"/>
</dbReference>
<dbReference type="InterPro" id="IPR002579">
    <property type="entry name" value="Met_Sox_Rdtase_MsrB_dom"/>
</dbReference>
<dbReference type="InterPro" id="IPR052150">
    <property type="entry name" value="MsrB_Met_sulfoxide_reductase"/>
</dbReference>
<dbReference type="InterPro" id="IPR011057">
    <property type="entry name" value="Mss4-like_sf"/>
</dbReference>
<dbReference type="PANTHER" id="PTHR46755">
    <property type="entry name" value="METHIONINE-R-SULFOXIDE REDUCTASE B1"/>
    <property type="match status" value="1"/>
</dbReference>
<dbReference type="PANTHER" id="PTHR46755:SF5">
    <property type="entry name" value="METHIONINE-R-SULFOXIDE REDUCTASE B1"/>
    <property type="match status" value="1"/>
</dbReference>
<dbReference type="Pfam" id="PF01641">
    <property type="entry name" value="SelR"/>
    <property type="match status" value="1"/>
</dbReference>
<dbReference type="SUPFAM" id="SSF51316">
    <property type="entry name" value="Mss4-like"/>
    <property type="match status" value="1"/>
</dbReference>
<dbReference type="PROSITE" id="PS51790">
    <property type="entry name" value="MSRB"/>
    <property type="match status" value="1"/>
</dbReference>
<organism>
    <name type="scientific">Mus musculus</name>
    <name type="common">Mouse</name>
    <dbReference type="NCBI Taxonomy" id="10090"/>
    <lineage>
        <taxon>Eukaryota</taxon>
        <taxon>Metazoa</taxon>
        <taxon>Chordata</taxon>
        <taxon>Craniata</taxon>
        <taxon>Vertebrata</taxon>
        <taxon>Euteleostomi</taxon>
        <taxon>Mammalia</taxon>
        <taxon>Eutheria</taxon>
        <taxon>Euarchontoglires</taxon>
        <taxon>Glires</taxon>
        <taxon>Rodentia</taxon>
        <taxon>Myomorpha</taxon>
        <taxon>Muroidea</taxon>
        <taxon>Muridae</taxon>
        <taxon>Murinae</taxon>
        <taxon>Mus</taxon>
        <taxon>Mus</taxon>
    </lineage>
</organism>
<comment type="function">
    <text evidence="3 4 5 6">Methionine-sulfoxide reductase that specifically reduces methionine (R)-sulfoxide back to methionine (PubMed:11929995, PubMed:14699060, PubMed:20605785, PubMed:23911929). While in many cases, methionine oxidation is the result of random oxidation following oxidative stress, methionine oxidation is also a post-translational modification that takes place on specific residue (PubMed:14699060, PubMed:20605785). Acts as a regulator of actin assembly by reducing methionine (R)-sulfoxide mediated by MICALs (MICAL1, MICAL2 or MICAL3) on actin, thereby promoting filament repolymerization (PubMed:23911929). Plays a role in innate immunity by reducing oxidized actin, leading to actin repolymerization in macrophages (PubMed:23911929).</text>
</comment>
<comment type="catalytic activity">
    <reaction evidence="3 6">
        <text>L-methionyl-[protein] + [thioredoxin]-disulfide + H2O = L-methionyl-(R)-S-oxide-[protein] + [thioredoxin]-dithiol</text>
        <dbReference type="Rhea" id="RHEA:24164"/>
        <dbReference type="Rhea" id="RHEA-COMP:10698"/>
        <dbReference type="Rhea" id="RHEA-COMP:10700"/>
        <dbReference type="Rhea" id="RHEA-COMP:12313"/>
        <dbReference type="Rhea" id="RHEA-COMP:12314"/>
        <dbReference type="ChEBI" id="CHEBI:15377"/>
        <dbReference type="ChEBI" id="CHEBI:16044"/>
        <dbReference type="ChEBI" id="CHEBI:29950"/>
        <dbReference type="ChEBI" id="CHEBI:45764"/>
        <dbReference type="ChEBI" id="CHEBI:50058"/>
        <dbReference type="EC" id="1.8.4.12"/>
    </reaction>
</comment>
<comment type="catalytic activity">
    <reaction evidence="3 4 5 6">
        <text>[thioredoxin]-disulfide + L-methionine + H2O = L-methionine (R)-S-oxide + [thioredoxin]-dithiol</text>
        <dbReference type="Rhea" id="RHEA:21260"/>
        <dbReference type="Rhea" id="RHEA-COMP:10698"/>
        <dbReference type="Rhea" id="RHEA-COMP:10700"/>
        <dbReference type="ChEBI" id="CHEBI:15377"/>
        <dbReference type="ChEBI" id="CHEBI:29950"/>
        <dbReference type="ChEBI" id="CHEBI:50058"/>
        <dbReference type="ChEBI" id="CHEBI:57844"/>
        <dbReference type="ChEBI" id="CHEBI:58773"/>
        <dbReference type="EC" id="1.8.4.14"/>
    </reaction>
</comment>
<comment type="cofactor">
    <cofactor evidence="4">
        <name>Zn(2+)</name>
        <dbReference type="ChEBI" id="CHEBI:29105"/>
    </cofactor>
    <text evidence="4 5">Binds 1 zinc ion per subunit.</text>
</comment>
<comment type="subcellular location">
    <subcellularLocation>
        <location evidence="4">Cytoplasm</location>
    </subcellularLocation>
    <subcellularLocation>
        <location evidence="4">Nucleus</location>
    </subcellularLocation>
    <subcellularLocation>
        <location evidence="6">Cytoplasm</location>
        <location evidence="6">Cytoskeleton</location>
    </subcellularLocation>
</comment>
<comment type="PTM">
    <text evidence="1">Truncated MSRB1/SEPX1 proteins produced by failed UGA/Sec decoding are ubiquitinated by the CRL2(FEM1C) E3 ubiquitin-protein ligase complex.</text>
</comment>
<comment type="similarity">
    <text evidence="7">Belongs to the MsrB Met sulfoxide reductase family.</text>
</comment>
<evidence type="ECO:0000250" key="1">
    <source>
        <dbReference type="UniProtKB" id="Q9NZV6"/>
    </source>
</evidence>
<evidence type="ECO:0000255" key="2">
    <source>
        <dbReference type="PROSITE-ProRule" id="PRU01126"/>
    </source>
</evidence>
<evidence type="ECO:0000269" key="3">
    <source>
    </source>
</evidence>
<evidence type="ECO:0000269" key="4">
    <source>
    </source>
</evidence>
<evidence type="ECO:0000269" key="5">
    <source>
    </source>
</evidence>
<evidence type="ECO:0000269" key="6">
    <source>
    </source>
</evidence>
<evidence type="ECO:0000305" key="7"/>
<evidence type="ECO:0000305" key="8">
    <source>
    </source>
</evidence>
<evidence type="ECO:0000312" key="9">
    <source>
        <dbReference type="PDB" id="2KV1"/>
    </source>
</evidence>
<evidence type="ECO:0007744" key="10">
    <source>
        <dbReference type="PDB" id="2KV1"/>
    </source>
</evidence>
<evidence type="ECO:0007829" key="11">
    <source>
        <dbReference type="PDB" id="2KV1"/>
    </source>
</evidence>
<name>MSRB1_MOUSE</name>
<proteinExistence type="evidence at protein level"/>
<keyword id="KW-0002">3D-structure</keyword>
<keyword id="KW-0963">Cytoplasm</keyword>
<keyword id="KW-0206">Cytoskeleton</keyword>
<keyword id="KW-0391">Immunity</keyword>
<keyword id="KW-0399">Innate immunity</keyword>
<keyword id="KW-0479">Metal-binding</keyword>
<keyword id="KW-0539">Nucleus</keyword>
<keyword id="KW-0560">Oxidoreductase</keyword>
<keyword id="KW-1185">Reference proteome</keyword>
<keyword id="KW-0712">Selenocysteine</keyword>
<keyword id="KW-0832">Ubl conjugation</keyword>
<keyword id="KW-0862">Zinc</keyword>
<sequence>MSFCSFFGGEVFQNHFEPGVYVCAKCSYELFSSHSKYAHSSPWPAFTETIHPDSVTKCPEKNRPEALKVSCGKCGNGLGHEFLNDGPKRGQSRFUIFSSSLKFVPKGKEAAASQGH</sequence>
<reference key="1">
    <citation type="journal article" date="1999" name="J. Biol. Chem.">
        <title>New mammalian selenocysteine-containing proteins identified with an algorithm that searches for selenocysteine insertion sequence elements.</title>
        <authorList>
            <person name="Kryukov G.V."/>
            <person name="Kryukov V.M."/>
            <person name="Gladyshev V.N."/>
        </authorList>
    </citation>
    <scope>NUCLEOTIDE SEQUENCE [MRNA]</scope>
</reference>
<reference key="2">
    <citation type="journal article" date="2005" name="Science">
        <title>The transcriptional landscape of the mammalian genome.</title>
        <authorList>
            <person name="Carninci P."/>
            <person name="Kasukawa T."/>
            <person name="Katayama S."/>
            <person name="Gough J."/>
            <person name="Frith M.C."/>
            <person name="Maeda N."/>
            <person name="Oyama R."/>
            <person name="Ravasi T."/>
            <person name="Lenhard B."/>
            <person name="Wells C."/>
            <person name="Kodzius R."/>
            <person name="Shimokawa K."/>
            <person name="Bajic V.B."/>
            <person name="Brenner S.E."/>
            <person name="Batalov S."/>
            <person name="Forrest A.R."/>
            <person name="Zavolan M."/>
            <person name="Davis M.J."/>
            <person name="Wilming L.G."/>
            <person name="Aidinis V."/>
            <person name="Allen J.E."/>
            <person name="Ambesi-Impiombato A."/>
            <person name="Apweiler R."/>
            <person name="Aturaliya R.N."/>
            <person name="Bailey T.L."/>
            <person name="Bansal M."/>
            <person name="Baxter L."/>
            <person name="Beisel K.W."/>
            <person name="Bersano T."/>
            <person name="Bono H."/>
            <person name="Chalk A.M."/>
            <person name="Chiu K.P."/>
            <person name="Choudhary V."/>
            <person name="Christoffels A."/>
            <person name="Clutterbuck D.R."/>
            <person name="Crowe M.L."/>
            <person name="Dalla E."/>
            <person name="Dalrymple B.P."/>
            <person name="de Bono B."/>
            <person name="Della Gatta G."/>
            <person name="di Bernardo D."/>
            <person name="Down T."/>
            <person name="Engstrom P."/>
            <person name="Fagiolini M."/>
            <person name="Faulkner G."/>
            <person name="Fletcher C.F."/>
            <person name="Fukushima T."/>
            <person name="Furuno M."/>
            <person name="Futaki S."/>
            <person name="Gariboldi M."/>
            <person name="Georgii-Hemming P."/>
            <person name="Gingeras T.R."/>
            <person name="Gojobori T."/>
            <person name="Green R.E."/>
            <person name="Gustincich S."/>
            <person name="Harbers M."/>
            <person name="Hayashi Y."/>
            <person name="Hensch T.K."/>
            <person name="Hirokawa N."/>
            <person name="Hill D."/>
            <person name="Huminiecki L."/>
            <person name="Iacono M."/>
            <person name="Ikeo K."/>
            <person name="Iwama A."/>
            <person name="Ishikawa T."/>
            <person name="Jakt M."/>
            <person name="Kanapin A."/>
            <person name="Katoh M."/>
            <person name="Kawasawa Y."/>
            <person name="Kelso J."/>
            <person name="Kitamura H."/>
            <person name="Kitano H."/>
            <person name="Kollias G."/>
            <person name="Krishnan S.P."/>
            <person name="Kruger A."/>
            <person name="Kummerfeld S.K."/>
            <person name="Kurochkin I.V."/>
            <person name="Lareau L.F."/>
            <person name="Lazarevic D."/>
            <person name="Lipovich L."/>
            <person name="Liu J."/>
            <person name="Liuni S."/>
            <person name="McWilliam S."/>
            <person name="Madan Babu M."/>
            <person name="Madera M."/>
            <person name="Marchionni L."/>
            <person name="Matsuda H."/>
            <person name="Matsuzawa S."/>
            <person name="Miki H."/>
            <person name="Mignone F."/>
            <person name="Miyake S."/>
            <person name="Morris K."/>
            <person name="Mottagui-Tabar S."/>
            <person name="Mulder N."/>
            <person name="Nakano N."/>
            <person name="Nakauchi H."/>
            <person name="Ng P."/>
            <person name="Nilsson R."/>
            <person name="Nishiguchi S."/>
            <person name="Nishikawa S."/>
            <person name="Nori F."/>
            <person name="Ohara O."/>
            <person name="Okazaki Y."/>
            <person name="Orlando V."/>
            <person name="Pang K.C."/>
            <person name="Pavan W.J."/>
            <person name="Pavesi G."/>
            <person name="Pesole G."/>
            <person name="Petrovsky N."/>
            <person name="Piazza S."/>
            <person name="Reed J."/>
            <person name="Reid J.F."/>
            <person name="Ring B.Z."/>
            <person name="Ringwald M."/>
            <person name="Rost B."/>
            <person name="Ruan Y."/>
            <person name="Salzberg S.L."/>
            <person name="Sandelin A."/>
            <person name="Schneider C."/>
            <person name="Schoenbach C."/>
            <person name="Sekiguchi K."/>
            <person name="Semple C.A."/>
            <person name="Seno S."/>
            <person name="Sessa L."/>
            <person name="Sheng Y."/>
            <person name="Shibata Y."/>
            <person name="Shimada H."/>
            <person name="Shimada K."/>
            <person name="Silva D."/>
            <person name="Sinclair B."/>
            <person name="Sperling S."/>
            <person name="Stupka E."/>
            <person name="Sugiura K."/>
            <person name="Sultana R."/>
            <person name="Takenaka Y."/>
            <person name="Taki K."/>
            <person name="Tammoja K."/>
            <person name="Tan S.L."/>
            <person name="Tang S."/>
            <person name="Taylor M.S."/>
            <person name="Tegner J."/>
            <person name="Teichmann S.A."/>
            <person name="Ueda H.R."/>
            <person name="van Nimwegen E."/>
            <person name="Verardo R."/>
            <person name="Wei C.L."/>
            <person name="Yagi K."/>
            <person name="Yamanishi H."/>
            <person name="Zabarovsky E."/>
            <person name="Zhu S."/>
            <person name="Zimmer A."/>
            <person name="Hide W."/>
            <person name="Bult C."/>
            <person name="Grimmond S.M."/>
            <person name="Teasdale R.D."/>
            <person name="Liu E.T."/>
            <person name="Brusic V."/>
            <person name="Quackenbush J."/>
            <person name="Wahlestedt C."/>
            <person name="Mattick J.S."/>
            <person name="Hume D.A."/>
            <person name="Kai C."/>
            <person name="Sasaki D."/>
            <person name="Tomaru Y."/>
            <person name="Fukuda S."/>
            <person name="Kanamori-Katayama M."/>
            <person name="Suzuki M."/>
            <person name="Aoki J."/>
            <person name="Arakawa T."/>
            <person name="Iida J."/>
            <person name="Imamura K."/>
            <person name="Itoh M."/>
            <person name="Kato T."/>
            <person name="Kawaji H."/>
            <person name="Kawagashira N."/>
            <person name="Kawashima T."/>
            <person name="Kojima M."/>
            <person name="Kondo S."/>
            <person name="Konno H."/>
            <person name="Nakano K."/>
            <person name="Ninomiya N."/>
            <person name="Nishio T."/>
            <person name="Okada M."/>
            <person name="Plessy C."/>
            <person name="Shibata K."/>
            <person name="Shiraki T."/>
            <person name="Suzuki S."/>
            <person name="Tagami M."/>
            <person name="Waki K."/>
            <person name="Watahiki A."/>
            <person name="Okamura-Oho Y."/>
            <person name="Suzuki H."/>
            <person name="Kawai J."/>
            <person name="Hayashizaki Y."/>
        </authorList>
    </citation>
    <scope>NUCLEOTIDE SEQUENCE [LARGE SCALE MRNA]</scope>
    <source>
        <strain>C57BL/6J</strain>
        <tissue>Heart</tissue>
        <tissue>Kidney</tissue>
    </source>
</reference>
<reference key="3">
    <citation type="journal article" date="2004" name="Genome Res.">
        <title>The status, quality, and expansion of the NIH full-length cDNA project: the Mammalian Gene Collection (MGC).</title>
        <authorList>
            <consortium name="The MGC Project Team"/>
        </authorList>
    </citation>
    <scope>NUCLEOTIDE SEQUENCE [LARGE SCALE MRNA]</scope>
    <source>
        <strain>C57BL/6J</strain>
        <tissue>Brain</tissue>
    </source>
</reference>
<reference key="4">
    <citation type="journal article" date="2002" name="Proc. Natl. Acad. Sci. U.S.A.">
        <title>Selenoprotein R is a zinc-containing stereo-specific methionine sulfoxide reductase.</title>
        <authorList>
            <person name="Kryukov G.V."/>
            <person name="Kumar R.A."/>
            <person name="Koc A."/>
            <person name="Sun Z."/>
            <person name="Gladyshev V.N."/>
        </authorList>
    </citation>
    <scope>FUNCTION</scope>
    <scope>CATALYTIC ACTIVITY</scope>
</reference>
<reference key="5">
    <citation type="journal article" date="2004" name="Mol. Biol. Cell">
        <title>Methionine sulfoxide reduction in mammals: characterization of methionine-R-sulfoxide reductases.</title>
        <authorList>
            <person name="Kim H.-Y."/>
            <person name="Gladyshev V.N."/>
        </authorList>
    </citation>
    <scope>FUNCTION</scope>
    <scope>CATALYTIC ACTIVITY</scope>
    <scope>COFACTOR</scope>
    <scope>SUBCELLULAR LOCATION</scope>
</reference>
<reference key="6">
    <citation type="journal article" date="2013" name="Mol. Cell">
        <title>MsrB1 and MICALs regulate actin assembly and macrophage function via reversible stereoselective methionine oxidation.</title>
        <authorList>
            <person name="Lee B.C."/>
            <person name="Peterfi Z."/>
            <person name="Hoffmann F.W."/>
            <person name="Moore R.E."/>
            <person name="Kaya A."/>
            <person name="Avanesov A."/>
            <person name="Tarrago L."/>
            <person name="Zhou Y."/>
            <person name="Weerapana E."/>
            <person name="Fomenko D.E."/>
            <person name="Hoffmann P.R."/>
            <person name="Gladyshev V.N."/>
        </authorList>
    </citation>
    <scope>FUNCTION</scope>
    <scope>CATALYTIC ACTIVITY</scope>
    <scope>SUBCELLULAR LOCATION</scope>
</reference>
<reference key="7">
    <citation type="journal article" date="2007" name="Biomol. NMR. Assign.">
        <title>NMR assignments of 1H, 13C and 15N spectra of methionine sulfoxide reductase B1 from Mus musculus.</title>
        <authorList>
            <person name="Sal L.S."/>
            <person name="Aachmann F.L."/>
            <person name="Kim H.Y."/>
            <person name="Gladyshev V.N."/>
            <person name="Dikiy A."/>
        </authorList>
    </citation>
    <scope>STRUCTURE BY NMR</scope>
</reference>
<reference evidence="10" key="8">
    <citation type="journal article" date="2010" name="J. Biol. Chem.">
        <title>Insights into function, catalytic mechanism, and fold evolution of selenoprotein methionine sulfoxide reductase B1 through structural analysis.</title>
        <authorList>
            <person name="Aachmann F.L."/>
            <person name="Sal L.S."/>
            <person name="Kim H.Y."/>
            <person name="Marino S.M."/>
            <person name="Gladyshev V.N."/>
            <person name="Dikiy A."/>
        </authorList>
    </citation>
    <scope>STRUCTURE BY NMR OF MUTANT SEL-95 IN COMPLEX WITH ZINC</scope>
    <scope>FUNCTION</scope>
    <scope>CATALYTIC ACTIVITY</scope>
    <scope>COFACTOR</scope>
    <scope>MUTAGENESIS OF SEC-95</scope>
</reference>
<protein>
    <recommendedName>
        <fullName>Methionine-R-sulfoxide reductase B1</fullName>
        <shortName>MsrB1</shortName>
        <ecNumber evidence="3 6">1.8.4.12</ecNumber>
        <ecNumber evidence="3 4 5 6">1.8.4.14</ecNumber>
    </recommendedName>
    <alternativeName>
        <fullName>Selenoprotein R</fullName>
        <shortName>SelR</shortName>
    </alternativeName>
    <alternativeName>
        <fullName>Selenoprotein X</fullName>
        <shortName>SelX</shortName>
    </alternativeName>
</protein>
<feature type="chain" id="PRO_0000140322" description="Methionine-R-sulfoxide reductase B1">
    <location>
        <begin position="1"/>
        <end position="116"/>
    </location>
</feature>
<feature type="domain" description="MsrB" evidence="2">
    <location>
        <begin position="1"/>
        <end position="106"/>
    </location>
</feature>
<feature type="active site" description="Nucleophile" evidence="2">
    <location>
        <position position="95"/>
    </location>
</feature>
<feature type="binding site" evidence="2 5 9">
    <location>
        <position position="23"/>
    </location>
    <ligand>
        <name>Zn(2+)</name>
        <dbReference type="ChEBI" id="CHEBI:29105"/>
    </ligand>
</feature>
<feature type="binding site" evidence="2 5 9">
    <location>
        <position position="26"/>
    </location>
    <ligand>
        <name>Zn(2+)</name>
        <dbReference type="ChEBI" id="CHEBI:29105"/>
    </ligand>
</feature>
<feature type="binding site" evidence="2 5 9">
    <location>
        <position position="71"/>
    </location>
    <ligand>
        <name>Zn(2+)</name>
        <dbReference type="ChEBI" id="CHEBI:29105"/>
    </ligand>
</feature>
<feature type="binding site" evidence="2 5 9">
    <location>
        <position position="74"/>
    </location>
    <ligand>
        <name>Zn(2+)</name>
        <dbReference type="ChEBI" id="CHEBI:29105"/>
    </ligand>
</feature>
<feature type="non-standard amino acid" description="Selenocysteine" evidence="8">
    <location>
        <position position="95"/>
    </location>
</feature>
<feature type="mutagenesis site" description="Optimum pH 7.5." evidence="5">
    <original>U</original>
    <variation>C</variation>
    <location>
        <position position="95"/>
    </location>
</feature>
<feature type="helix" evidence="11">
    <location>
        <begin position="12"/>
        <end position="14"/>
    </location>
</feature>
<feature type="strand" evidence="11">
    <location>
        <begin position="19"/>
        <end position="23"/>
    </location>
</feature>
<feature type="turn" evidence="11">
    <location>
        <begin position="24"/>
        <end position="26"/>
    </location>
</feature>
<feature type="strand" evidence="11">
    <location>
        <begin position="41"/>
        <end position="43"/>
    </location>
</feature>
<feature type="strand" evidence="11">
    <location>
        <begin position="56"/>
        <end position="59"/>
    </location>
</feature>
<feature type="strand" evidence="11">
    <location>
        <begin position="61"/>
        <end position="63"/>
    </location>
</feature>
<feature type="strand" evidence="11">
    <location>
        <begin position="67"/>
        <end position="70"/>
    </location>
</feature>
<feature type="turn" evidence="11">
    <location>
        <begin position="72"/>
        <end position="75"/>
    </location>
</feature>
<feature type="strand" evidence="11">
    <location>
        <begin position="79"/>
        <end position="81"/>
    </location>
</feature>
<feature type="turn" evidence="11">
    <location>
        <begin position="87"/>
        <end position="90"/>
    </location>
</feature>
<feature type="turn" evidence="11">
    <location>
        <begin position="98"/>
        <end position="100"/>
    </location>
</feature>
<feature type="strand" evidence="11">
    <location>
        <begin position="101"/>
        <end position="105"/>
    </location>
</feature>
<feature type="strand" evidence="11">
    <location>
        <begin position="107"/>
        <end position="109"/>
    </location>
</feature>
<accession>Q9JLC3</accession>
<accession>Q545U8</accession>
<gene>
    <name type="primary">Msrb1</name>
    <name type="synonym">Sepr</name>
    <name type="synonym">Sepx1</name>
</gene>